<gene>
    <name evidence="1" type="primary">cobQ</name>
    <name type="ordered locus">Moth_1098</name>
</gene>
<dbReference type="EMBL" id="CP000232">
    <property type="protein sequence ID" value="ABC19412.1"/>
    <property type="molecule type" value="Genomic_DNA"/>
</dbReference>
<dbReference type="RefSeq" id="YP_429955.1">
    <property type="nucleotide sequence ID" value="NC_007644.1"/>
</dbReference>
<dbReference type="SMR" id="Q2RJH7"/>
<dbReference type="STRING" id="264732.Moth_1098"/>
<dbReference type="EnsemblBacteria" id="ABC19412">
    <property type="protein sequence ID" value="ABC19412"/>
    <property type="gene ID" value="Moth_1098"/>
</dbReference>
<dbReference type="KEGG" id="mta:Moth_1098"/>
<dbReference type="PATRIC" id="fig|264732.11.peg.1179"/>
<dbReference type="eggNOG" id="COG1492">
    <property type="taxonomic scope" value="Bacteria"/>
</dbReference>
<dbReference type="HOGENOM" id="CLU_019250_2_2_9"/>
<dbReference type="OrthoDB" id="9808302at2"/>
<dbReference type="UniPathway" id="UPA00148"/>
<dbReference type="GO" id="GO:0015420">
    <property type="term" value="F:ABC-type vitamin B12 transporter activity"/>
    <property type="evidence" value="ECO:0007669"/>
    <property type="project" value="UniProtKB-UniRule"/>
</dbReference>
<dbReference type="GO" id="GO:0003824">
    <property type="term" value="F:catalytic activity"/>
    <property type="evidence" value="ECO:0007669"/>
    <property type="project" value="InterPro"/>
</dbReference>
<dbReference type="GO" id="GO:0009236">
    <property type="term" value="P:cobalamin biosynthetic process"/>
    <property type="evidence" value="ECO:0007669"/>
    <property type="project" value="UniProtKB-UniRule"/>
</dbReference>
<dbReference type="CDD" id="cd05389">
    <property type="entry name" value="CobQ_N"/>
    <property type="match status" value="1"/>
</dbReference>
<dbReference type="CDD" id="cd01750">
    <property type="entry name" value="GATase1_CobQ"/>
    <property type="match status" value="1"/>
</dbReference>
<dbReference type="Gene3D" id="3.40.50.880">
    <property type="match status" value="1"/>
</dbReference>
<dbReference type="Gene3D" id="3.40.50.300">
    <property type="entry name" value="P-loop containing nucleotide triphosphate hydrolases"/>
    <property type="match status" value="1"/>
</dbReference>
<dbReference type="HAMAP" id="MF_00028">
    <property type="entry name" value="CobQ"/>
    <property type="match status" value="1"/>
</dbReference>
<dbReference type="InterPro" id="IPR029062">
    <property type="entry name" value="Class_I_gatase-like"/>
</dbReference>
<dbReference type="InterPro" id="IPR002586">
    <property type="entry name" value="CobQ/CobB/MinD/ParA_Nub-bd_dom"/>
</dbReference>
<dbReference type="InterPro" id="IPR033949">
    <property type="entry name" value="CobQ_GATase1"/>
</dbReference>
<dbReference type="InterPro" id="IPR047045">
    <property type="entry name" value="CobQ_N"/>
</dbReference>
<dbReference type="InterPro" id="IPR004459">
    <property type="entry name" value="CobQ_synth"/>
</dbReference>
<dbReference type="InterPro" id="IPR011698">
    <property type="entry name" value="GATase_3"/>
</dbReference>
<dbReference type="InterPro" id="IPR027417">
    <property type="entry name" value="P-loop_NTPase"/>
</dbReference>
<dbReference type="NCBIfam" id="TIGR00313">
    <property type="entry name" value="cobQ"/>
    <property type="match status" value="1"/>
</dbReference>
<dbReference type="NCBIfam" id="NF001989">
    <property type="entry name" value="PRK00784.1"/>
    <property type="match status" value="1"/>
</dbReference>
<dbReference type="PANTHER" id="PTHR21343:SF1">
    <property type="entry name" value="COBYRIC ACID SYNTHASE"/>
    <property type="match status" value="1"/>
</dbReference>
<dbReference type="PANTHER" id="PTHR21343">
    <property type="entry name" value="DETHIOBIOTIN SYNTHETASE"/>
    <property type="match status" value="1"/>
</dbReference>
<dbReference type="Pfam" id="PF01656">
    <property type="entry name" value="CbiA"/>
    <property type="match status" value="1"/>
</dbReference>
<dbReference type="Pfam" id="PF07685">
    <property type="entry name" value="GATase_3"/>
    <property type="match status" value="1"/>
</dbReference>
<dbReference type="SUPFAM" id="SSF52317">
    <property type="entry name" value="Class I glutamine amidotransferase-like"/>
    <property type="match status" value="1"/>
</dbReference>
<dbReference type="SUPFAM" id="SSF52540">
    <property type="entry name" value="P-loop containing nucleoside triphosphate hydrolases"/>
    <property type="match status" value="1"/>
</dbReference>
<dbReference type="PROSITE" id="PS51274">
    <property type="entry name" value="GATASE_COBBQ"/>
    <property type="match status" value="1"/>
</dbReference>
<comment type="function">
    <text evidence="1">Catalyzes amidations at positions B, D, E, and G on adenosylcobyrinic A,C-diamide. NH(2) groups are provided by glutamine, and one molecule of ATP is hydrogenolyzed for each amidation.</text>
</comment>
<comment type="pathway">
    <text evidence="1">Cofactor biosynthesis; adenosylcobalamin biosynthesis.</text>
</comment>
<comment type="similarity">
    <text evidence="1">Belongs to the CobB/CobQ family. CobQ subfamily.</text>
</comment>
<sequence length="517" mass="55616">MAKAIMLQGTSSNVGKSVLAAALCRIFHRNGYRVSPFKSQNMALNSGATPDGGEMGRAQIVQAMAAGVVPRVEMNPILLKPTAHASSQVIVLGRPVGNLGAREYHGHFNQKLWSRVEEAYAFLEREFEIIVIEGAGSPAEINLKAGEIANMRVARMAGAPVLLVADIDRGGALAAVVGTLELLEPEERVMVAGIIINKFRGDLDLLKPALDFLESRTGKPVLGVIPFLPDHGLPEEDSVVLEGVTGRSTGAGEVEIAVIKLPCISNFTDFDALEREKGVNLRYVEAASDLGNPDLVILPGSKNTIGDLLWLRCQGLETAIKELAGRGTPIIGICGGYQMLGKEIRDPEHVETDVEMIKGLDLLPIKTVFQTSKATNQVRGVVTGSGPFLGPLQGQEVQGYEIHMGASFLLDGRPAFKITSRGGRLVTLDDGALAGEGRIWGTYIHGILDNDSLRHQVISVLRARRGLPARPGMLNFMAEQERRLDILAGEVARHLDLGRLAAIMGLERPLVWTGHDN</sequence>
<proteinExistence type="inferred from homology"/>
<evidence type="ECO:0000255" key="1">
    <source>
        <dbReference type="HAMAP-Rule" id="MF_00028"/>
    </source>
</evidence>
<name>COBQ_MOOTA</name>
<accession>Q2RJH7</accession>
<protein>
    <recommendedName>
        <fullName evidence="1">Cobyric acid synthase</fullName>
    </recommendedName>
</protein>
<feature type="chain" id="PRO_1000002367" description="Cobyric acid synthase">
    <location>
        <begin position="1"/>
        <end position="517"/>
    </location>
</feature>
<feature type="domain" description="GATase cobBQ-type" evidence="1">
    <location>
        <begin position="253"/>
        <end position="453"/>
    </location>
</feature>
<feature type="active site" description="Nucleophile" evidence="1">
    <location>
        <position position="334"/>
    </location>
</feature>
<feature type="active site" evidence="1">
    <location>
        <position position="445"/>
    </location>
</feature>
<keyword id="KW-0169">Cobalamin biosynthesis</keyword>
<keyword id="KW-0315">Glutamine amidotransferase</keyword>
<reference key="1">
    <citation type="journal article" date="2008" name="Environ. Microbiol.">
        <title>The complete genome sequence of Moorella thermoacetica (f. Clostridium thermoaceticum).</title>
        <authorList>
            <person name="Pierce E."/>
            <person name="Xie G."/>
            <person name="Barabote R.D."/>
            <person name="Saunders E."/>
            <person name="Han C.S."/>
            <person name="Detter J.C."/>
            <person name="Richardson P."/>
            <person name="Brettin T.S."/>
            <person name="Das A."/>
            <person name="Ljungdahl L.G."/>
            <person name="Ragsdale S.W."/>
        </authorList>
    </citation>
    <scope>NUCLEOTIDE SEQUENCE [LARGE SCALE GENOMIC DNA]</scope>
    <source>
        <strain>ATCC 39073 / JCM 9320</strain>
    </source>
</reference>
<organism>
    <name type="scientific">Moorella thermoacetica (strain ATCC 39073 / JCM 9320)</name>
    <dbReference type="NCBI Taxonomy" id="264732"/>
    <lineage>
        <taxon>Bacteria</taxon>
        <taxon>Bacillati</taxon>
        <taxon>Bacillota</taxon>
        <taxon>Clostridia</taxon>
        <taxon>Moorellales</taxon>
        <taxon>Moorellaceae</taxon>
        <taxon>Moorella</taxon>
    </lineage>
</organism>